<sequence>MGRDTIADIITSIRNADMNRKGTIQIASTNITENIVKILLREGFIKNVRKHQENNKYFLVLTLRHRRNRKGPYRTILNLKRISRPGLRIYSNYQRIPRILGGMGIVILSTSRGIMTDREARLEGIGGEILCYIW</sequence>
<accession>Q49KW3</accession>
<name>RR8_EUCGG</name>
<comment type="function">
    <text evidence="1">One of the primary rRNA binding proteins, it binds directly to 16S rRNA central domain where it helps coordinate assembly of the platform of the 30S subunit.</text>
</comment>
<comment type="subunit">
    <text evidence="1">Part of the 30S ribosomal subunit.</text>
</comment>
<comment type="subcellular location">
    <subcellularLocation>
        <location>Plastid</location>
        <location>Chloroplast</location>
    </subcellularLocation>
</comment>
<comment type="similarity">
    <text evidence="2">Belongs to the universal ribosomal protein uS8 family.</text>
</comment>
<organism>
    <name type="scientific">Eucalyptus globulus subsp. globulus</name>
    <name type="common">Tasmanian blue gum</name>
    <dbReference type="NCBI Taxonomy" id="71271"/>
    <lineage>
        <taxon>Eukaryota</taxon>
        <taxon>Viridiplantae</taxon>
        <taxon>Streptophyta</taxon>
        <taxon>Embryophyta</taxon>
        <taxon>Tracheophyta</taxon>
        <taxon>Spermatophyta</taxon>
        <taxon>Magnoliopsida</taxon>
        <taxon>eudicotyledons</taxon>
        <taxon>Gunneridae</taxon>
        <taxon>Pentapetalae</taxon>
        <taxon>rosids</taxon>
        <taxon>malvids</taxon>
        <taxon>Myrtales</taxon>
        <taxon>Myrtaceae</taxon>
        <taxon>Myrtoideae</taxon>
        <taxon>Eucalypteae</taxon>
        <taxon>Eucalyptus</taxon>
    </lineage>
</organism>
<evidence type="ECO:0000250" key="1"/>
<evidence type="ECO:0000305" key="2"/>
<protein>
    <recommendedName>
        <fullName evidence="2">Small ribosomal subunit protein uS8c</fullName>
    </recommendedName>
    <alternativeName>
        <fullName>30S ribosomal protein S8, chloroplastic</fullName>
    </alternativeName>
</protein>
<dbReference type="EMBL" id="AY780259">
    <property type="protein sequence ID" value="AAX21062.1"/>
    <property type="molecule type" value="Genomic_DNA"/>
</dbReference>
<dbReference type="RefSeq" id="YP_636334.1">
    <property type="nucleotide sequence ID" value="NC_008115.1"/>
</dbReference>
<dbReference type="SMR" id="Q49KW3"/>
<dbReference type="GeneID" id="4108484"/>
<dbReference type="GO" id="GO:0009507">
    <property type="term" value="C:chloroplast"/>
    <property type="evidence" value="ECO:0007669"/>
    <property type="project" value="UniProtKB-SubCell"/>
</dbReference>
<dbReference type="GO" id="GO:1990904">
    <property type="term" value="C:ribonucleoprotein complex"/>
    <property type="evidence" value="ECO:0007669"/>
    <property type="project" value="UniProtKB-KW"/>
</dbReference>
<dbReference type="GO" id="GO:0005840">
    <property type="term" value="C:ribosome"/>
    <property type="evidence" value="ECO:0007669"/>
    <property type="project" value="UniProtKB-KW"/>
</dbReference>
<dbReference type="GO" id="GO:0019843">
    <property type="term" value="F:rRNA binding"/>
    <property type="evidence" value="ECO:0007669"/>
    <property type="project" value="UniProtKB-UniRule"/>
</dbReference>
<dbReference type="GO" id="GO:0003735">
    <property type="term" value="F:structural constituent of ribosome"/>
    <property type="evidence" value="ECO:0007669"/>
    <property type="project" value="InterPro"/>
</dbReference>
<dbReference type="GO" id="GO:0006412">
    <property type="term" value="P:translation"/>
    <property type="evidence" value="ECO:0007669"/>
    <property type="project" value="UniProtKB-UniRule"/>
</dbReference>
<dbReference type="FunFam" id="3.30.1490.10:FF:000001">
    <property type="entry name" value="30S ribosomal protein S8"/>
    <property type="match status" value="1"/>
</dbReference>
<dbReference type="FunFam" id="3.30.1370.30:FF:000004">
    <property type="entry name" value="30S ribosomal protein S8, chloroplastic"/>
    <property type="match status" value="1"/>
</dbReference>
<dbReference type="Gene3D" id="3.30.1370.30">
    <property type="match status" value="1"/>
</dbReference>
<dbReference type="Gene3D" id="3.30.1490.10">
    <property type="match status" value="1"/>
</dbReference>
<dbReference type="HAMAP" id="MF_01302_B">
    <property type="entry name" value="Ribosomal_uS8_B"/>
    <property type="match status" value="1"/>
</dbReference>
<dbReference type="InterPro" id="IPR000630">
    <property type="entry name" value="Ribosomal_uS8"/>
</dbReference>
<dbReference type="InterPro" id="IPR047863">
    <property type="entry name" value="Ribosomal_uS8_CS"/>
</dbReference>
<dbReference type="InterPro" id="IPR035987">
    <property type="entry name" value="Ribosomal_uS8_sf"/>
</dbReference>
<dbReference type="NCBIfam" id="NF001109">
    <property type="entry name" value="PRK00136.1"/>
    <property type="match status" value="1"/>
</dbReference>
<dbReference type="PANTHER" id="PTHR11758">
    <property type="entry name" value="40S RIBOSOMAL PROTEIN S15A"/>
    <property type="match status" value="1"/>
</dbReference>
<dbReference type="Pfam" id="PF00410">
    <property type="entry name" value="Ribosomal_S8"/>
    <property type="match status" value="1"/>
</dbReference>
<dbReference type="SUPFAM" id="SSF56047">
    <property type="entry name" value="Ribosomal protein S8"/>
    <property type="match status" value="1"/>
</dbReference>
<dbReference type="PROSITE" id="PS00053">
    <property type="entry name" value="RIBOSOMAL_S8"/>
    <property type="match status" value="1"/>
</dbReference>
<proteinExistence type="inferred from homology"/>
<geneLocation type="chloroplast"/>
<gene>
    <name type="primary">rps8</name>
</gene>
<reference key="1">
    <citation type="journal article" date="2005" name="DNA Res.">
        <title>Complete nucleotide sequence of the chloroplast genome from the Tasmanian blue gum, Eucalyptus globulus (Myrtaceae).</title>
        <authorList>
            <person name="Steane D.A."/>
        </authorList>
    </citation>
    <scope>NUCLEOTIDE SEQUENCE [LARGE SCALE GENOMIC DNA]</scope>
</reference>
<keyword id="KW-0150">Chloroplast</keyword>
<keyword id="KW-0934">Plastid</keyword>
<keyword id="KW-0687">Ribonucleoprotein</keyword>
<keyword id="KW-0689">Ribosomal protein</keyword>
<keyword id="KW-0694">RNA-binding</keyword>
<keyword id="KW-0699">rRNA-binding</keyword>
<feature type="chain" id="PRO_0000225907" description="Small ribosomal subunit protein uS8c">
    <location>
        <begin position="1"/>
        <end position="134"/>
    </location>
</feature>